<comment type="function">
    <text evidence="1">Part of the high-affinity ATP-driven potassium transport (or Kdp) system, which catalyzes the hydrolysis of ATP coupled with the electrogenic transport of potassium into the cytoplasm. This subunit acts as a catalytic chaperone that increases the ATP-binding affinity of the ATP-hydrolyzing subunit KdpB by the formation of a transient KdpB/KdpC/ATP ternary complex.</text>
</comment>
<comment type="subunit">
    <text evidence="1">The system is composed of three essential subunits: KdpA, KdpB and KdpC.</text>
</comment>
<comment type="subcellular location">
    <subcellularLocation>
        <location evidence="1">Cell inner membrane</location>
        <topology evidence="1">Single-pass membrane protein</topology>
    </subcellularLocation>
</comment>
<comment type="similarity">
    <text evidence="1">Belongs to the KdpC family.</text>
</comment>
<reference key="1">
    <citation type="journal article" date="2009" name="J. Bacteriol.">
        <title>Complete genome sequence and comparative genome analysis of enteropathogenic Escherichia coli O127:H6 strain E2348/69.</title>
        <authorList>
            <person name="Iguchi A."/>
            <person name="Thomson N.R."/>
            <person name="Ogura Y."/>
            <person name="Saunders D."/>
            <person name="Ooka T."/>
            <person name="Henderson I.R."/>
            <person name="Harris D."/>
            <person name="Asadulghani M."/>
            <person name="Kurokawa K."/>
            <person name="Dean P."/>
            <person name="Kenny B."/>
            <person name="Quail M.A."/>
            <person name="Thurston S."/>
            <person name="Dougan G."/>
            <person name="Hayashi T."/>
            <person name="Parkhill J."/>
            <person name="Frankel G."/>
        </authorList>
    </citation>
    <scope>NUCLEOTIDE SEQUENCE [LARGE SCALE GENOMIC DNA]</scope>
    <source>
        <strain>E2348/69 / EPEC</strain>
    </source>
</reference>
<name>KDPC_ECO27</name>
<sequence length="190" mass="20438">MRGLRPALSTFLFLLLITGGVYPLLTTALGQWWFPWQANGSLIREGDTVRGSALIGQNFTGNGYFHGRPSATAEMPYNPQASGGSNLAVSNPELDKQIAARVAELRAANPDASTNVPVELVTASASGLDNNITPQAAAWQIPRVAKARNLSVEQLTQLIAKYSQQPLVKYIGQPVVNIVELNLALDKLDE</sequence>
<feature type="chain" id="PRO_1000132515" description="Potassium-transporting ATPase KdpC subunit">
    <location>
        <begin position="1"/>
        <end position="190"/>
    </location>
</feature>
<feature type="transmembrane region" description="Helical" evidence="1">
    <location>
        <begin position="10"/>
        <end position="30"/>
    </location>
</feature>
<organism>
    <name type="scientific">Escherichia coli O127:H6 (strain E2348/69 / EPEC)</name>
    <dbReference type="NCBI Taxonomy" id="574521"/>
    <lineage>
        <taxon>Bacteria</taxon>
        <taxon>Pseudomonadati</taxon>
        <taxon>Pseudomonadota</taxon>
        <taxon>Gammaproteobacteria</taxon>
        <taxon>Enterobacterales</taxon>
        <taxon>Enterobacteriaceae</taxon>
        <taxon>Escherichia</taxon>
    </lineage>
</organism>
<evidence type="ECO:0000255" key="1">
    <source>
        <dbReference type="HAMAP-Rule" id="MF_00276"/>
    </source>
</evidence>
<proteinExistence type="inferred from homology"/>
<accession>B7UKX5</accession>
<keyword id="KW-0067">ATP-binding</keyword>
<keyword id="KW-0997">Cell inner membrane</keyword>
<keyword id="KW-1003">Cell membrane</keyword>
<keyword id="KW-0406">Ion transport</keyword>
<keyword id="KW-0472">Membrane</keyword>
<keyword id="KW-0547">Nucleotide-binding</keyword>
<keyword id="KW-0630">Potassium</keyword>
<keyword id="KW-0633">Potassium transport</keyword>
<keyword id="KW-1185">Reference proteome</keyword>
<keyword id="KW-0812">Transmembrane</keyword>
<keyword id="KW-1133">Transmembrane helix</keyword>
<keyword id="KW-0813">Transport</keyword>
<dbReference type="EMBL" id="FM180568">
    <property type="protein sequence ID" value="CAS08133.1"/>
    <property type="molecule type" value="Genomic_DNA"/>
</dbReference>
<dbReference type="RefSeq" id="WP_001339349.1">
    <property type="nucleotide sequence ID" value="NC_011601.1"/>
</dbReference>
<dbReference type="SMR" id="B7UKX5"/>
<dbReference type="KEGG" id="ecg:E2348C_0585"/>
<dbReference type="HOGENOM" id="CLU_077094_2_0_6"/>
<dbReference type="Proteomes" id="UP000008205">
    <property type="component" value="Chromosome"/>
</dbReference>
<dbReference type="GO" id="GO:0005886">
    <property type="term" value="C:plasma membrane"/>
    <property type="evidence" value="ECO:0007669"/>
    <property type="project" value="UniProtKB-SubCell"/>
</dbReference>
<dbReference type="GO" id="GO:0005524">
    <property type="term" value="F:ATP binding"/>
    <property type="evidence" value="ECO:0007669"/>
    <property type="project" value="UniProtKB-UniRule"/>
</dbReference>
<dbReference type="GO" id="GO:0008556">
    <property type="term" value="F:P-type potassium transmembrane transporter activity"/>
    <property type="evidence" value="ECO:0007669"/>
    <property type="project" value="InterPro"/>
</dbReference>
<dbReference type="HAMAP" id="MF_00276">
    <property type="entry name" value="KdpC"/>
    <property type="match status" value="1"/>
</dbReference>
<dbReference type="InterPro" id="IPR003820">
    <property type="entry name" value="KdpC"/>
</dbReference>
<dbReference type="NCBIfam" id="TIGR00681">
    <property type="entry name" value="kdpC"/>
    <property type="match status" value="1"/>
</dbReference>
<dbReference type="NCBIfam" id="NF001454">
    <property type="entry name" value="PRK00315.1"/>
    <property type="match status" value="1"/>
</dbReference>
<dbReference type="PANTHER" id="PTHR30042">
    <property type="entry name" value="POTASSIUM-TRANSPORTING ATPASE C CHAIN"/>
    <property type="match status" value="1"/>
</dbReference>
<dbReference type="PANTHER" id="PTHR30042:SF2">
    <property type="entry name" value="POTASSIUM-TRANSPORTING ATPASE KDPC SUBUNIT"/>
    <property type="match status" value="1"/>
</dbReference>
<dbReference type="Pfam" id="PF02669">
    <property type="entry name" value="KdpC"/>
    <property type="match status" value="1"/>
</dbReference>
<dbReference type="PIRSF" id="PIRSF001296">
    <property type="entry name" value="K_ATPase_KdpC"/>
    <property type="match status" value="1"/>
</dbReference>
<gene>
    <name evidence="1" type="primary">kdpC</name>
    <name type="ordered locus">E2348C_0585</name>
</gene>
<protein>
    <recommendedName>
        <fullName evidence="1">Potassium-transporting ATPase KdpC subunit</fullName>
    </recommendedName>
    <alternativeName>
        <fullName evidence="1">ATP phosphohydrolase [potassium-transporting] C chain</fullName>
    </alternativeName>
    <alternativeName>
        <fullName evidence="1">Potassium-binding and translocating subunit C</fullName>
    </alternativeName>
    <alternativeName>
        <fullName evidence="1">Potassium-translocating ATPase C chain</fullName>
    </alternativeName>
</protein>